<accession>Q59829</accession>
<accession>Q9S1N0</accession>
<reference key="1">
    <citation type="submission" date="1995-10" db="EMBL/GenBank/DDBJ databases">
        <authorList>
            <person name="Strohl W.R."/>
        </authorList>
    </citation>
    <scope>NUCLEOTIDE SEQUENCE [GENOMIC DNA]</scope>
    <source>
        <strain>A3(2) / 1147</strain>
    </source>
</reference>
<reference key="2">
    <citation type="journal article" date="2002" name="Nature">
        <title>Complete genome sequence of the model actinomycete Streptomyces coelicolor A3(2).</title>
        <authorList>
            <person name="Bentley S.D."/>
            <person name="Chater K.F."/>
            <person name="Cerdeno-Tarraga A.-M."/>
            <person name="Challis G.L."/>
            <person name="Thomson N.R."/>
            <person name="James K.D."/>
            <person name="Harris D.E."/>
            <person name="Quail M.A."/>
            <person name="Kieser H."/>
            <person name="Harper D."/>
            <person name="Bateman A."/>
            <person name="Brown S."/>
            <person name="Chandra G."/>
            <person name="Chen C.W."/>
            <person name="Collins M."/>
            <person name="Cronin A."/>
            <person name="Fraser A."/>
            <person name="Goble A."/>
            <person name="Hidalgo J."/>
            <person name="Hornsby T."/>
            <person name="Howarth S."/>
            <person name="Huang C.-H."/>
            <person name="Kieser T."/>
            <person name="Larke L."/>
            <person name="Murphy L.D."/>
            <person name="Oliver K."/>
            <person name="O'Neil S."/>
            <person name="Rabbinowitsch E."/>
            <person name="Rajandream M.A."/>
            <person name="Rutherford K.M."/>
            <person name="Rutter S."/>
            <person name="Seeger K."/>
            <person name="Saunders D."/>
            <person name="Sharp S."/>
            <person name="Squares R."/>
            <person name="Squares S."/>
            <person name="Taylor K."/>
            <person name="Warren T."/>
            <person name="Wietzorrek A."/>
            <person name="Woodward J.R."/>
            <person name="Barrell B.G."/>
            <person name="Parkhill J."/>
            <person name="Hopwood D.A."/>
        </authorList>
    </citation>
    <scope>NUCLEOTIDE SEQUENCE [LARGE SCALE GENOMIC DNA]</scope>
    <source>
        <strain>ATCC BAA-471 / A3(2) / M145</strain>
    </source>
</reference>
<reference key="3">
    <citation type="journal article" date="1996" name="J. Bacteriol.">
        <title>Cloning, purification, and properties of a phosphotyrosine protein phosphatase from Streptomyces coelicolor A3(2).</title>
        <authorList>
            <person name="Li Y."/>
            <person name="Strohl W.R."/>
        </authorList>
    </citation>
    <scope>NUCLEOTIDE SEQUENCE [GENOMIC DNA] OF 1-205</scope>
    <source>
        <strain>A3(2) / 1147</strain>
    </source>
</reference>
<name>CYSA_STRCO</name>
<gene>
    <name type="primary">cysA</name>
    <name type="ordered locus">SCO3920</name>
    <name type="ORF">SCQ11.03c</name>
</gene>
<dbReference type="EC" id="4.4.1.1"/>
<dbReference type="EMBL" id="U37580">
    <property type="protein sequence ID" value="AAC43615.1"/>
    <property type="molecule type" value="Genomic_DNA"/>
</dbReference>
<dbReference type="EMBL" id="AL939118">
    <property type="protein sequence ID" value="CAB46958.1"/>
    <property type="molecule type" value="Genomic_DNA"/>
</dbReference>
<dbReference type="PIR" id="T37173">
    <property type="entry name" value="T37173"/>
</dbReference>
<dbReference type="RefSeq" id="NP_628105.1">
    <property type="nucleotide sequence ID" value="NC_003888.3"/>
</dbReference>
<dbReference type="RefSeq" id="WP_011029309.1">
    <property type="nucleotide sequence ID" value="NZ_VNID01000003.1"/>
</dbReference>
<dbReference type="SMR" id="Q59829"/>
<dbReference type="STRING" id="100226.gene:17761547"/>
<dbReference type="PaxDb" id="100226-SCO3920"/>
<dbReference type="KEGG" id="sco:SCO3920"/>
<dbReference type="PATRIC" id="fig|100226.15.peg.3994"/>
<dbReference type="eggNOG" id="COG0626">
    <property type="taxonomic scope" value="Bacteria"/>
</dbReference>
<dbReference type="HOGENOM" id="CLU_018986_2_2_11"/>
<dbReference type="InParanoid" id="Q59829"/>
<dbReference type="OrthoDB" id="9780685at2"/>
<dbReference type="PhylomeDB" id="Q59829"/>
<dbReference type="UniPathway" id="UPA00136">
    <property type="reaction ID" value="UER00202"/>
</dbReference>
<dbReference type="Proteomes" id="UP000001973">
    <property type="component" value="Chromosome"/>
</dbReference>
<dbReference type="GO" id="GO:0005737">
    <property type="term" value="C:cytoplasm"/>
    <property type="evidence" value="ECO:0000318"/>
    <property type="project" value="GO_Central"/>
</dbReference>
<dbReference type="GO" id="GO:0004123">
    <property type="term" value="F:cystathionine gamma-lyase activity"/>
    <property type="evidence" value="ECO:0000318"/>
    <property type="project" value="GO_Central"/>
</dbReference>
<dbReference type="GO" id="GO:0030170">
    <property type="term" value="F:pyridoxal phosphate binding"/>
    <property type="evidence" value="ECO:0000318"/>
    <property type="project" value="GO_Central"/>
</dbReference>
<dbReference type="GO" id="GO:0019343">
    <property type="term" value="P:cysteine biosynthetic process via cystathionine"/>
    <property type="evidence" value="ECO:0000318"/>
    <property type="project" value="GO_Central"/>
</dbReference>
<dbReference type="GO" id="GO:0019346">
    <property type="term" value="P:transsulfuration"/>
    <property type="evidence" value="ECO:0000318"/>
    <property type="project" value="GO_Central"/>
</dbReference>
<dbReference type="CDD" id="cd00614">
    <property type="entry name" value="CGS_like"/>
    <property type="match status" value="1"/>
</dbReference>
<dbReference type="FunFam" id="3.40.640.10:FF:000085">
    <property type="entry name" value="Cystathionine gamma-lyase"/>
    <property type="match status" value="1"/>
</dbReference>
<dbReference type="FunFam" id="3.90.1150.10:FF:000188">
    <property type="entry name" value="Dubious cystathionine gamma-lyase"/>
    <property type="match status" value="1"/>
</dbReference>
<dbReference type="Gene3D" id="3.90.1150.10">
    <property type="entry name" value="Aspartate Aminotransferase, domain 1"/>
    <property type="match status" value="1"/>
</dbReference>
<dbReference type="Gene3D" id="3.40.640.10">
    <property type="entry name" value="Type I PLP-dependent aspartate aminotransferase-like (Major domain)"/>
    <property type="match status" value="1"/>
</dbReference>
<dbReference type="InterPro" id="IPR000277">
    <property type="entry name" value="Cys/Met-Metab_PyrdxlP-dep_enz"/>
</dbReference>
<dbReference type="InterPro" id="IPR054542">
    <property type="entry name" value="Cys_met_metab_PP"/>
</dbReference>
<dbReference type="InterPro" id="IPR015424">
    <property type="entry name" value="PyrdxlP-dep_Trfase"/>
</dbReference>
<dbReference type="InterPro" id="IPR015421">
    <property type="entry name" value="PyrdxlP-dep_Trfase_major"/>
</dbReference>
<dbReference type="InterPro" id="IPR015422">
    <property type="entry name" value="PyrdxlP-dep_Trfase_small"/>
</dbReference>
<dbReference type="NCBIfam" id="NF005758">
    <property type="entry name" value="PRK07582.1"/>
    <property type="match status" value="1"/>
</dbReference>
<dbReference type="PANTHER" id="PTHR11808:SF85">
    <property type="entry name" value="CYSTATHIONINE GAMMA-LYASE-RELATED"/>
    <property type="match status" value="1"/>
</dbReference>
<dbReference type="PANTHER" id="PTHR11808">
    <property type="entry name" value="TRANS-SULFURATION ENZYME FAMILY MEMBER"/>
    <property type="match status" value="1"/>
</dbReference>
<dbReference type="Pfam" id="PF01053">
    <property type="entry name" value="Cys_Met_Meta_PP"/>
    <property type="match status" value="1"/>
</dbReference>
<dbReference type="PIRSF" id="PIRSF001434">
    <property type="entry name" value="CGS"/>
    <property type="match status" value="1"/>
</dbReference>
<dbReference type="SUPFAM" id="SSF53383">
    <property type="entry name" value="PLP-dependent transferases"/>
    <property type="match status" value="1"/>
</dbReference>
<dbReference type="PROSITE" id="PS00868">
    <property type="entry name" value="CYS_MET_METAB_PP"/>
    <property type="match status" value="1"/>
</dbReference>
<comment type="catalytic activity">
    <reaction>
        <text>L,L-cystathionine + H2O = 2-oxobutanoate + L-cysteine + NH4(+)</text>
        <dbReference type="Rhea" id="RHEA:14005"/>
        <dbReference type="ChEBI" id="CHEBI:15377"/>
        <dbReference type="ChEBI" id="CHEBI:16763"/>
        <dbReference type="ChEBI" id="CHEBI:28938"/>
        <dbReference type="ChEBI" id="CHEBI:35235"/>
        <dbReference type="ChEBI" id="CHEBI:58161"/>
        <dbReference type="EC" id="4.4.1.1"/>
    </reaction>
</comment>
<comment type="cofactor">
    <cofactor evidence="1">
        <name>pyridoxal 5'-phosphate</name>
        <dbReference type="ChEBI" id="CHEBI:597326"/>
    </cofactor>
</comment>
<comment type="pathway">
    <text>Amino-acid biosynthesis; L-cysteine biosynthesis; L-cysteine from L-homocysteine and L-serine: step 2/2.</text>
</comment>
<comment type="subcellular location">
    <subcellularLocation>
        <location evidence="1">Cytoplasm</location>
    </subcellularLocation>
</comment>
<comment type="similarity">
    <text evidence="3">Belongs to the trans-sulfuration enzymes family.</text>
</comment>
<proteinExistence type="inferred from homology"/>
<evidence type="ECO:0000250" key="1"/>
<evidence type="ECO:0000256" key="2">
    <source>
        <dbReference type="SAM" id="MobiDB-lite"/>
    </source>
</evidence>
<evidence type="ECO:0000305" key="3"/>
<keyword id="KW-0028">Amino-acid biosynthesis</keyword>
<keyword id="KW-0198">Cysteine biosynthesis</keyword>
<keyword id="KW-0963">Cytoplasm</keyword>
<keyword id="KW-0456">Lyase</keyword>
<keyword id="KW-0663">Pyridoxal phosphate</keyword>
<keyword id="KW-1185">Reference proteome</keyword>
<sequence>MSDSATTDSAGTGGERSASAPGDGTRAVRAGLPEPVKHEPTLPGPVFAAHFHLPGDPTGPYTYGRDENPTWTRLESAIGELEAPGEAGVETLVFASGMAAISSVLFSQLRAGDTAVLPDDGYQALPLVRAQLEAYGIEVRTAPTGRDAQLDVLDGAKLLWIETPSNPGLDVCDVRRLVEAAHAGGALVAVDNTLATPLGQRPLELGADFSVASGTKQLTGHGDVLLGYVAGRDAGAMAAVRRWRKIVGAIPGPMEAWLAHRSIATLQLRVDRQDSTALKVAEALRTRPEITGLRYPGLPDDPSHKVASQQMLRYGCVVSFTLPSRARADRFLDALRLVEGATSFGGVRSTAERRGRWGGDAVPEGFIRLSVGAEDPDDLVADLLRALDETTE</sequence>
<organism>
    <name type="scientific">Streptomyces coelicolor (strain ATCC BAA-471 / A3(2) / M145)</name>
    <dbReference type="NCBI Taxonomy" id="100226"/>
    <lineage>
        <taxon>Bacteria</taxon>
        <taxon>Bacillati</taxon>
        <taxon>Actinomycetota</taxon>
        <taxon>Actinomycetes</taxon>
        <taxon>Kitasatosporales</taxon>
        <taxon>Streptomycetaceae</taxon>
        <taxon>Streptomyces</taxon>
        <taxon>Streptomyces albidoflavus group</taxon>
    </lineage>
</organism>
<protein>
    <recommendedName>
        <fullName>Putative cystathionine gamma-lyase</fullName>
        <ecNumber>4.4.1.1</ecNumber>
    </recommendedName>
    <alternativeName>
        <fullName>Gamma-cystathionase</fullName>
    </alternativeName>
</protein>
<feature type="chain" id="PRO_0000114755" description="Putative cystathionine gamma-lyase">
    <location>
        <begin position="1"/>
        <end position="392"/>
    </location>
</feature>
<feature type="region of interest" description="Disordered" evidence="2">
    <location>
        <begin position="1"/>
        <end position="41"/>
    </location>
</feature>
<feature type="compositionally biased region" description="Polar residues" evidence="2">
    <location>
        <begin position="1"/>
        <end position="10"/>
    </location>
</feature>
<feature type="modified residue" description="N6-(pyridoxal phosphate)lysine" evidence="1">
    <location>
        <position position="216"/>
    </location>
</feature>
<feature type="sequence conflict" description="In Ref. 1 and 3." evidence="3" ref="1 3">
    <original>P</original>
    <variation>R</variation>
    <location>
        <position position="118"/>
    </location>
</feature>
<feature type="sequence conflict" description="In Ref. 1; AAC43615." evidence="3" ref="1">
    <original>L</original>
    <variation>V</variation>
    <location>
        <position position="384"/>
    </location>
</feature>